<dbReference type="EC" id="3.4.24.-"/>
<dbReference type="EMBL" id="AJ512753">
    <property type="protein sequence ID" value="CAD54808.3"/>
    <property type="molecule type" value="mRNA"/>
</dbReference>
<dbReference type="EMBL" id="AY189815">
    <property type="protein sequence ID" value="AAO74895.1"/>
    <property type="molecule type" value="mRNA"/>
</dbReference>
<dbReference type="EMBL" id="AY189816">
    <property type="protein sequence ID" value="AAO74896.1"/>
    <property type="molecule type" value="mRNA"/>
</dbReference>
<dbReference type="EMBL" id="AC084382">
    <property type="status" value="NOT_ANNOTATED_CDS"/>
    <property type="molecule type" value="Genomic_DNA"/>
</dbReference>
<dbReference type="EMBL" id="AC084384">
    <property type="status" value="NOT_ANNOTATED_CDS"/>
    <property type="molecule type" value="Genomic_DNA"/>
</dbReference>
<dbReference type="CCDS" id="CCDS27770.1">
    <molecule id="P59511-1"/>
</dbReference>
<dbReference type="CCDS" id="CCDS49711.1">
    <molecule id="P59511-2"/>
</dbReference>
<dbReference type="RefSeq" id="NP_001158257.1">
    <molecule id="P59511-2"/>
    <property type="nucleotide sequence ID" value="NM_001164785.2"/>
</dbReference>
<dbReference type="RefSeq" id="NP_803180.3">
    <molecule id="P59511-1"/>
    <property type="nucleotide sequence ID" value="NM_177431.5"/>
</dbReference>
<dbReference type="SMR" id="P59511"/>
<dbReference type="BioGRID" id="230203">
    <property type="interactions" value="1"/>
</dbReference>
<dbReference type="FunCoup" id="P59511">
    <property type="interactions" value="150"/>
</dbReference>
<dbReference type="STRING" id="10090.ENSMUSP00000036330"/>
<dbReference type="MEROPS" id="M12.188"/>
<dbReference type="GlyCosmos" id="P59511">
    <property type="glycosylation" value="10 sites, No reported glycans"/>
</dbReference>
<dbReference type="GlyGen" id="P59511">
    <property type="glycosylation" value="10 sites, 1 N-linked glycan (1 site)"/>
</dbReference>
<dbReference type="PhosphoSitePlus" id="P59511"/>
<dbReference type="CPTAC" id="non-CPTAC-3963"/>
<dbReference type="PaxDb" id="10090-ENSMUSP00000036330"/>
<dbReference type="PeptideAtlas" id="P59511"/>
<dbReference type="Antibodypedia" id="25100">
    <property type="antibodies" value="29 antibodies from 15 providers"/>
</dbReference>
<dbReference type="DNASU" id="223838"/>
<dbReference type="Ensembl" id="ENSMUST00000035342.11">
    <molecule id="P59511-1"/>
    <property type="protein sequence ID" value="ENSMUSP00000036330.5"/>
    <property type="gene ID" value="ENSMUSG00000022449.15"/>
</dbReference>
<dbReference type="Ensembl" id="ENSMUST00000155907.2">
    <molecule id="P59511-2"/>
    <property type="protein sequence ID" value="ENSMUSP00000121696.2"/>
    <property type="gene ID" value="ENSMUSG00000022449.15"/>
</dbReference>
<dbReference type="GeneID" id="223838"/>
<dbReference type="KEGG" id="mmu:223838"/>
<dbReference type="UCSC" id="uc007xje.2">
    <molecule id="P59511-1"/>
    <property type="organism name" value="mouse"/>
</dbReference>
<dbReference type="UCSC" id="uc007xjf.2">
    <molecule id="P59511-2"/>
    <property type="organism name" value="mouse"/>
</dbReference>
<dbReference type="AGR" id="MGI:2660628"/>
<dbReference type="CTD" id="80070"/>
<dbReference type="MGI" id="MGI:2660628">
    <property type="gene designation" value="Adamts20"/>
</dbReference>
<dbReference type="VEuPathDB" id="HostDB:ENSMUSG00000022449"/>
<dbReference type="eggNOG" id="KOG3538">
    <property type="taxonomic scope" value="Eukaryota"/>
</dbReference>
<dbReference type="GeneTree" id="ENSGT00940000158636"/>
<dbReference type="HOGENOM" id="CLU_000660_0_1_1"/>
<dbReference type="InParanoid" id="P59511"/>
<dbReference type="OMA" id="RHSYNID"/>
<dbReference type="OrthoDB" id="5948003at2759"/>
<dbReference type="PhylomeDB" id="P59511"/>
<dbReference type="TreeFam" id="TF331949"/>
<dbReference type="Reactome" id="R-MMU-5173214">
    <property type="pathway name" value="O-glycosylation of TSR domain-containing proteins"/>
</dbReference>
<dbReference type="BioGRID-ORCS" id="223838">
    <property type="hits" value="3 hits in 77 CRISPR screens"/>
</dbReference>
<dbReference type="ChiTaRS" id="Adamts20">
    <property type="organism name" value="mouse"/>
</dbReference>
<dbReference type="PRO" id="PR:P59511"/>
<dbReference type="Proteomes" id="UP000000589">
    <property type="component" value="Chromosome 15"/>
</dbReference>
<dbReference type="RNAct" id="P59511">
    <property type="molecule type" value="protein"/>
</dbReference>
<dbReference type="Bgee" id="ENSMUSG00000022449">
    <property type="expression patterns" value="Expressed in presomitic mesoderm and 166 other cell types or tissues"/>
</dbReference>
<dbReference type="GO" id="GO:0005615">
    <property type="term" value="C:extracellular space"/>
    <property type="evidence" value="ECO:0000314"/>
    <property type="project" value="MGI"/>
</dbReference>
<dbReference type="GO" id="GO:0004175">
    <property type="term" value="F:endopeptidase activity"/>
    <property type="evidence" value="ECO:0000314"/>
    <property type="project" value="MGI"/>
</dbReference>
<dbReference type="GO" id="GO:0004222">
    <property type="term" value="F:metalloendopeptidase activity"/>
    <property type="evidence" value="ECO:0000314"/>
    <property type="project" value="MGI"/>
</dbReference>
<dbReference type="GO" id="GO:0008270">
    <property type="term" value="F:zinc ion binding"/>
    <property type="evidence" value="ECO:0007669"/>
    <property type="project" value="InterPro"/>
</dbReference>
<dbReference type="GO" id="GO:0006915">
    <property type="term" value="P:apoptotic process"/>
    <property type="evidence" value="ECO:0000315"/>
    <property type="project" value="MGI"/>
</dbReference>
<dbReference type="GO" id="GO:0030198">
    <property type="term" value="P:extracellular matrix organization"/>
    <property type="evidence" value="ECO:0000314"/>
    <property type="project" value="MGI"/>
</dbReference>
<dbReference type="GO" id="GO:0030318">
    <property type="term" value="P:melanocyte differentiation"/>
    <property type="evidence" value="ECO:0000315"/>
    <property type="project" value="MGI"/>
</dbReference>
<dbReference type="GO" id="GO:0043066">
    <property type="term" value="P:negative regulation of apoptotic process"/>
    <property type="evidence" value="ECO:0000315"/>
    <property type="project" value="MGI"/>
</dbReference>
<dbReference type="GO" id="GO:0045636">
    <property type="term" value="P:positive regulation of melanocyte differentiation"/>
    <property type="evidence" value="ECO:0000315"/>
    <property type="project" value="MGI"/>
</dbReference>
<dbReference type="GO" id="GO:0009967">
    <property type="term" value="P:positive regulation of signal transduction"/>
    <property type="evidence" value="ECO:0000315"/>
    <property type="project" value="MGI"/>
</dbReference>
<dbReference type="GO" id="GO:0006508">
    <property type="term" value="P:proteolysis"/>
    <property type="evidence" value="ECO:0000314"/>
    <property type="project" value="MGI"/>
</dbReference>
<dbReference type="GO" id="GO:0048070">
    <property type="term" value="P:regulation of developmental pigmentation"/>
    <property type="evidence" value="ECO:0000315"/>
    <property type="project" value="MGI"/>
</dbReference>
<dbReference type="GO" id="GO:0007165">
    <property type="term" value="P:signal transduction"/>
    <property type="evidence" value="ECO:0000315"/>
    <property type="project" value="MGI"/>
</dbReference>
<dbReference type="CDD" id="cd04273">
    <property type="entry name" value="ZnMc_ADAMTS_like"/>
    <property type="match status" value="1"/>
</dbReference>
<dbReference type="FunFam" id="2.20.100.10:FF:000006">
    <property type="entry name" value="A disintegrin and metalloproteinase with thrombospondin motifs 1"/>
    <property type="match status" value="1"/>
</dbReference>
<dbReference type="FunFam" id="2.60.120.830:FF:000001">
    <property type="entry name" value="A disintegrin and metalloproteinase with thrombospondin motifs 1"/>
    <property type="match status" value="1"/>
</dbReference>
<dbReference type="FunFam" id="3.40.390.10:FF:000001">
    <property type="entry name" value="A disintegrin and metalloproteinase with thrombospondin motifs 1"/>
    <property type="match status" value="1"/>
</dbReference>
<dbReference type="FunFam" id="2.20.100.10:FF:000005">
    <property type="entry name" value="ADAM metallopeptidase with thrombospondin type 1 motif 9"/>
    <property type="match status" value="8"/>
</dbReference>
<dbReference type="FunFam" id="2.20.100.10:FF:000010">
    <property type="entry name" value="ADAM metallopeptidase with thrombospondin type 1 motif 9"/>
    <property type="match status" value="1"/>
</dbReference>
<dbReference type="FunFam" id="3.40.1620.60:FF:000005">
    <property type="entry name" value="ADAM metallopeptidase with thrombospondin type 1 motif 9"/>
    <property type="match status" value="1"/>
</dbReference>
<dbReference type="Gene3D" id="2.60.120.830">
    <property type="match status" value="1"/>
</dbReference>
<dbReference type="Gene3D" id="3.40.1620.60">
    <property type="match status" value="2"/>
</dbReference>
<dbReference type="Gene3D" id="3.40.390.10">
    <property type="entry name" value="Collagenase (Catalytic Domain)"/>
    <property type="match status" value="1"/>
</dbReference>
<dbReference type="Gene3D" id="2.20.100.10">
    <property type="entry name" value="Thrombospondin type-1 (TSP1) repeat"/>
    <property type="match status" value="12"/>
</dbReference>
<dbReference type="InterPro" id="IPR013273">
    <property type="entry name" value="ADAMTS/ADAMTS-like"/>
</dbReference>
<dbReference type="InterPro" id="IPR050439">
    <property type="entry name" value="ADAMTS_ADAMTS-like"/>
</dbReference>
<dbReference type="InterPro" id="IPR041645">
    <property type="entry name" value="ADAMTS_CR_2"/>
</dbReference>
<dbReference type="InterPro" id="IPR045371">
    <property type="entry name" value="ADAMTS_CR_3"/>
</dbReference>
<dbReference type="InterPro" id="IPR010294">
    <property type="entry name" value="ADAMTS_spacer1"/>
</dbReference>
<dbReference type="InterPro" id="IPR024079">
    <property type="entry name" value="MetalloPept_cat_dom_sf"/>
</dbReference>
<dbReference type="InterPro" id="IPR012314">
    <property type="entry name" value="Pept_M12B_GON-ADAMTSs"/>
</dbReference>
<dbReference type="InterPro" id="IPR001590">
    <property type="entry name" value="Peptidase_M12B"/>
</dbReference>
<dbReference type="InterPro" id="IPR002870">
    <property type="entry name" value="Peptidase_M12B_N"/>
</dbReference>
<dbReference type="InterPro" id="IPR000884">
    <property type="entry name" value="TSP1_rpt"/>
</dbReference>
<dbReference type="InterPro" id="IPR036383">
    <property type="entry name" value="TSP1_rpt_sf"/>
</dbReference>
<dbReference type="PANTHER" id="PTHR13723:SF278">
    <property type="entry name" value="ADAM METALLOPEPTIDASE WITH THROMBOSPONDIN TYPE 1 MOTIF A, ISOFORM B"/>
    <property type="match status" value="1"/>
</dbReference>
<dbReference type="PANTHER" id="PTHR13723">
    <property type="entry name" value="ADAMTS A DISINTEGRIN AND METALLOPROTEASE WITH THROMBOSPONDIN MOTIFS PROTEASE"/>
    <property type="match status" value="1"/>
</dbReference>
<dbReference type="Pfam" id="PF17771">
    <property type="entry name" value="ADAMTS_CR_2"/>
    <property type="match status" value="1"/>
</dbReference>
<dbReference type="Pfam" id="PF19236">
    <property type="entry name" value="ADAMTS_CR_3"/>
    <property type="match status" value="1"/>
</dbReference>
<dbReference type="Pfam" id="PF05986">
    <property type="entry name" value="ADAMTS_spacer1"/>
    <property type="match status" value="1"/>
</dbReference>
<dbReference type="Pfam" id="PF08685">
    <property type="entry name" value="GON"/>
    <property type="match status" value="1"/>
</dbReference>
<dbReference type="Pfam" id="PF01562">
    <property type="entry name" value="Pep_M12B_propep"/>
    <property type="match status" value="1"/>
</dbReference>
<dbReference type="Pfam" id="PF01421">
    <property type="entry name" value="Reprolysin"/>
    <property type="match status" value="1"/>
</dbReference>
<dbReference type="Pfam" id="PF19030">
    <property type="entry name" value="TSP1_ADAMTS"/>
    <property type="match status" value="13"/>
</dbReference>
<dbReference type="Pfam" id="PF00090">
    <property type="entry name" value="TSP_1"/>
    <property type="match status" value="1"/>
</dbReference>
<dbReference type="PRINTS" id="PR01857">
    <property type="entry name" value="ADAMTSFAMILY"/>
</dbReference>
<dbReference type="SMART" id="SM00209">
    <property type="entry name" value="TSP1"/>
    <property type="match status" value="14"/>
</dbReference>
<dbReference type="SUPFAM" id="SSF55486">
    <property type="entry name" value="Metalloproteases ('zincins'), catalytic domain"/>
    <property type="match status" value="1"/>
</dbReference>
<dbReference type="SUPFAM" id="SSF82895">
    <property type="entry name" value="TSP-1 type 1 repeat"/>
    <property type="match status" value="13"/>
</dbReference>
<dbReference type="PROSITE" id="PS50215">
    <property type="entry name" value="ADAM_MEPRO"/>
    <property type="match status" value="1"/>
</dbReference>
<dbReference type="PROSITE" id="PS51046">
    <property type="entry name" value="GON"/>
    <property type="match status" value="1"/>
</dbReference>
<dbReference type="PROSITE" id="PS50092">
    <property type="entry name" value="TSP1"/>
    <property type="match status" value="13"/>
</dbReference>
<dbReference type="PROSITE" id="PS00142">
    <property type="entry name" value="ZINC_PROTEASE"/>
    <property type="match status" value="1"/>
</dbReference>
<sequence>MRVAKWLTGLLCPISLLLTGSWEVRFHPRQEALVKTLASYEVVTPTRVNEFGDVFPQNRHFSRKKRSSGVPEPPPFRTHYRISAYGQLFQLNLSADAAFLAAGYTEVHLGTPVPGPGGRSTESPDLRHCFYRGQVNAREDHTAVFSLCGGLMGTFKANDGEYFLEPVLRADGSAHDDDHNKPHLIYRQELKRNSFARSHKPCEVSENQMEKTALPSQSSRNTTGDVDIEEEAVFRLEGERSQLHSRNKRFLSYPRYVEVMVTADAKMVHHHGQNLQHYVLTLMSIVAAIYKDSSIGNLINIVIVKLVVIHSEQEGPVISFNAATTLRNFCLWQQSQNVPDDAHPSHHDTAVLITREDICGAKEKCDTLGLAELGTLCDPSRSCSISEENGLSAAFTIAHELGHVFNVPHDDSFKCKEAGIKHQYHVMAPTLNYHTSPWTWSACSQKHITEFLDTGHGECLLDKPNGRTYDLSPQLPGSVYDGNRQCELMFGPGSQVCPYLKHCRRLWCTSAEGVHKGCRTQHMPLADGTSCGPGMHCHRGLCVTRDMETRPVDGEWGPWGPYSSCSRTCGGGIKSTARLCDRPEPRNGGRYCVGRRMKFRSCNTDSCPKGKRDFREKQCSDFDGKHFDINGLPPNVRWLPKYSGIAVKDRCKLYCRVAGTTSFYQLKDRVADGTPCGTETNDICVQGLCRQAGCDHVLNSKAKRDKCGVCGGDNSSCQTLAGVFNSAHYGYNVVVKIPAGATNIEILQHSYSGRPEDDNYLALSDTQGNFLLNGNFVVSMAKKEINIQGAVFEYSGSNNSIERINSTDRLEAELVLQVLCVGNLYNPDVRYSFNIPIEERSNLFSWDPYGPWQDCTKMCQGLHRRKIACVRKSDHAVVSDHNCGHLPMPLFVTEKCNMDCELRWHIIGKSDCSSQCGQGYRTLDVHCMKYSVHKGQAVPVGDQYCGDQLKPPSREPCHGSCVLTRWHYSEWSQCSRSCGGGDKTRESYCVNGFGHRLAESECRELPRVVLENCNEFPCPSWATSEWSECPVTCGKGMKQRQVWCQLSEDPMRDGFCNASTKPESLRPCELRACASWHVGPWGSCTATCGHGYQMRAVKCISEIFGTMLDDRECPQASRPSDRQDCILAPCLAIPEVGATSLPAIPLGRAAQWRHGSWTPCSVSCGRGSQARYVSCRDAHDEVADESNCAHLPRPAAVSLCFSPCGEWQAGDWSPCSASCGHGKTTRRVLCVNYHQLVDESYCDPEGRPVTEQECSLAACPPLYSRAPSSSEQPSHVPSRNVPLTHKPGENQDQGAQLSIRGNQWRTGPWGACSRSCAGGLQHRAVVCQDEDGRSATSCDGSSKPPESRHCGSGPCPHWNYGDWGECTQTCGGGVKSRFVICQFPNGQMTQEHSCELPKPPSMMQCHLHACPEDVSWYRGPWKSCSASCGKGVKYREVLCIDQFQRKLEEKYCSHLHKPRTHKACRSGRCPSWKANKWKECSVTCGSGVQQREVYCRLRGTGRVSEDMCDPSTRPQGQRQCWRQDCMRYQWTTGDWLDCSTSCKKKETYRLVKCVNEQNVQANESLCDPLTKPLSIKKCRNPHCKYSVVTGDSSQCAGNCGFTSPQKITYCTKIQSSKKHTFHQLRPVVYGECPVIPSPQAYKCDLRSCLHVATWKVGKWSKCSVTCGIGIMERRVACRTENGWPSDLCLKRLKPDAQKKCYANDCKLLTTCKELQVTNNVTKDGDYDLNVRGRILKIHCSGMQLENPREYLPLVKSEDNFSEIYGLRLQNPYECPFNGSRRPDCACENDYLPAGYTVFSKVRVDLESMQIKTADLLFSQTLSGKAVPFATAGDCYSAARCPQGQFSINLAGTGMKISNTAKWLAQGRYASVIIHRSQDGTKVYGRCGGFCGKCIPHMATGLSIQVL</sequence>
<name>ATS20_MOUSE</name>
<reference key="1">
    <citation type="journal article" date="2003" name="J. Biol. Chem.">
        <title>Identification and characterization of ADAMTS-20 defines a novel subfamily of metalloproteinases-disintegrins with multiple thrombospondin-1 repeats and a unique GON domain.</title>
        <authorList>
            <person name="Llamazares M."/>
            <person name="Cal S."/>
            <person name="Quesada V."/>
            <person name="Lopez-Otin C."/>
        </authorList>
    </citation>
    <scope>NUCLEOTIDE SEQUENCE [MRNA] (ISOFORM 1)</scope>
    <source>
        <tissue>Fetal brain</tissue>
    </source>
</reference>
<reference key="2">
    <citation type="journal article" date="2003" name="Development">
        <title>A defect in a novel ADAMTS family member is the cause of the belted white-spotting mutation.</title>
        <authorList>
            <person name="Rao C."/>
            <person name="Foernzler D."/>
            <person name="Loftus S.K."/>
            <person name="Liu S."/>
            <person name="McPherson J.D."/>
            <person name="Jungers K.A."/>
            <person name="Apte S.S."/>
            <person name="Pavan W.J."/>
            <person name="Beier D.R."/>
        </authorList>
    </citation>
    <scope>NUCLEOTIDE SEQUENCE [MRNA] (ISOFORMS 1 AND 2)</scope>
    <scope>DISEASE</scope>
    <source>
        <strain>DBA/2J</strain>
    </source>
</reference>
<reference key="3">
    <citation type="journal article" date="2009" name="PLoS Biol.">
        <title>Lineage-specific biology revealed by a finished genome assembly of the mouse.</title>
        <authorList>
            <person name="Church D.M."/>
            <person name="Goodstadt L."/>
            <person name="Hillier L.W."/>
            <person name="Zody M.C."/>
            <person name="Goldstein S."/>
            <person name="She X."/>
            <person name="Bult C.J."/>
            <person name="Agarwala R."/>
            <person name="Cherry J.L."/>
            <person name="DiCuccio M."/>
            <person name="Hlavina W."/>
            <person name="Kapustin Y."/>
            <person name="Meric P."/>
            <person name="Maglott D."/>
            <person name="Birtle Z."/>
            <person name="Marques A.C."/>
            <person name="Graves T."/>
            <person name="Zhou S."/>
            <person name="Teague B."/>
            <person name="Potamousis K."/>
            <person name="Churas C."/>
            <person name="Place M."/>
            <person name="Herschleb J."/>
            <person name="Runnheim R."/>
            <person name="Forrest D."/>
            <person name="Amos-Landgraf J."/>
            <person name="Schwartz D.C."/>
            <person name="Cheng Z."/>
            <person name="Lindblad-Toh K."/>
            <person name="Eichler E.E."/>
            <person name="Ponting C.P."/>
        </authorList>
    </citation>
    <scope>NUCLEOTIDE SEQUENCE [LARGE SCALE GENOMIC DNA]</scope>
    <source>
        <strain>C57BL/6J</strain>
    </source>
</reference>
<protein>
    <recommendedName>
        <fullName>A disintegrin and metalloproteinase with thrombospondin motifs 20</fullName>
        <shortName>ADAM-TS 20</shortName>
        <shortName>ADAM-TS20</shortName>
        <shortName>ADAMTS-20</shortName>
        <ecNumber>3.4.24.-</ecNumber>
    </recommendedName>
</protein>
<comment type="function">
    <text>May play a role in tissue-remodeling process occurring in both normal and pathological conditions. May have a protease-independent function in the transport from the endoplasmic reticulum to the Golgi apparatus of secretory cargos, mediated by the GON domain.</text>
</comment>
<comment type="cofactor">
    <cofactor evidence="1">
        <name>Zn(2+)</name>
        <dbReference type="ChEBI" id="CHEBI:29105"/>
    </cofactor>
    <text evidence="1">Binds 1 zinc ion per subunit.</text>
</comment>
<comment type="subcellular location">
    <subcellularLocation>
        <location evidence="1">Secreted</location>
        <location evidence="1">Extracellular space</location>
        <location evidence="1">Extracellular matrix</location>
    </subcellularLocation>
</comment>
<comment type="alternative products">
    <event type="alternative splicing"/>
    <isoform>
        <id>P59511-1</id>
        <name>1</name>
        <name>ADAMTS20 B long isoform</name>
        <sequence type="displayed"/>
    </isoform>
    <isoform>
        <id>P59511-2</id>
        <name>2</name>
        <name>ADAMTS20 A short isoform</name>
        <sequence type="described" ref="VSP_007606 VSP_007607"/>
    </isoform>
</comment>
<comment type="tissue specificity">
    <text>Expressed at low level in testis and brain.</text>
</comment>
<comment type="PTM">
    <text evidence="1">The precursor is cleaved by a furin endopeptidase.</text>
</comment>
<comment type="PTM">
    <text evidence="1">Glycosylated. Can be O-fucosylated by POFUT2 on a serine or a threonine residue found within the consensus sequence C1-X(2)-(S/T)-C2-G of the TSP type-1 repeat domains where C1 and C2 are the first and second cysteine residue of the repeat, respectively. Fucosylated repeats can then be further glycosylated by the addition of a beta-1,3-glucose residue by the glucosyltransferase, B3GALTL. Fucosylation mediates the efficient secretion of ADAMTS family members. Can also be C-glycosylated with one or two mannose molecules on tryptophan residues within the consensus sequence W-X-X-W of the TPRs, and N-glycosylated. These other glycosylations can also facilitate secretion (By similarity).</text>
</comment>
<comment type="disease">
    <text evidence="8">Defects in Adamts20 are the cause of the belted (bt) phenotype. It is a pigmental defect which occurs as a result of a defect in melanocyte development.</text>
</comment>
<feature type="signal peptide" evidence="2">
    <location>
        <begin position="1"/>
        <end position="26"/>
    </location>
</feature>
<feature type="propeptide" id="PRO_0000029208" evidence="1">
    <location>
        <begin position="27"/>
        <end position="249"/>
    </location>
</feature>
<feature type="chain" id="PRO_0000029209" description="A disintegrin and metalloproteinase with thrombospondin motifs 20">
    <location>
        <begin position="250"/>
        <end position="1906"/>
    </location>
</feature>
<feature type="domain" description="Peptidase M12B" evidence="4">
    <location>
        <begin position="255"/>
        <end position="464"/>
    </location>
</feature>
<feature type="domain" description="Disintegrin">
    <location>
        <begin position="465"/>
        <end position="552"/>
    </location>
</feature>
<feature type="domain" description="TSP type-1 1" evidence="3">
    <location>
        <begin position="553"/>
        <end position="608"/>
    </location>
</feature>
<feature type="domain" description="TSP type-1 2" evidence="3">
    <location>
        <begin position="843"/>
        <end position="901"/>
    </location>
</feature>
<feature type="domain" description="TSP type-1 3" evidence="3">
    <location>
        <begin position="906"/>
        <end position="962"/>
    </location>
</feature>
<feature type="domain" description="TSP type-1 4" evidence="3">
    <location>
        <begin position="962"/>
        <end position="1015"/>
    </location>
</feature>
<feature type="domain" description="TSP type-1 5" evidence="3">
    <location>
        <begin position="1017"/>
        <end position="1074"/>
    </location>
</feature>
<feature type="domain" description="TSP type-1 6" evidence="3">
    <location>
        <begin position="1075"/>
        <end position="1131"/>
    </location>
</feature>
<feature type="domain" description="TSP type-1 7" evidence="3">
    <location>
        <begin position="1148"/>
        <end position="1202"/>
    </location>
</feature>
<feature type="domain" description="TSP type-1 8" evidence="3">
    <location>
        <begin position="1203"/>
        <end position="1260"/>
    </location>
</feature>
<feature type="domain" description="TSP type-1 9" evidence="3">
    <location>
        <begin position="1300"/>
        <end position="1351"/>
    </location>
</feature>
<feature type="domain" description="TSP type-1 10" evidence="3">
    <location>
        <begin position="1354"/>
        <end position="1411"/>
    </location>
</feature>
<feature type="domain" description="TSP type-1 11" evidence="3">
    <location>
        <begin position="1412"/>
        <end position="1465"/>
    </location>
</feature>
<feature type="domain" description="TSP type-1 12" evidence="3">
    <location>
        <begin position="1468"/>
        <end position="1526"/>
    </location>
</feature>
<feature type="domain" description="TSP type-1 13" evidence="3">
    <location>
        <begin position="1527"/>
        <end position="1584"/>
    </location>
</feature>
<feature type="domain" description="TSP type-1 14" evidence="3">
    <location>
        <begin position="1585"/>
        <end position="1648"/>
    </location>
</feature>
<feature type="domain" description="TSP type-1 15" evidence="3">
    <location>
        <begin position="1650"/>
        <end position="1706"/>
    </location>
</feature>
<feature type="domain" description="GON" evidence="5">
    <location>
        <begin position="1707"/>
        <end position="1906"/>
    </location>
</feature>
<feature type="region of interest" description="Disordered" evidence="7">
    <location>
        <begin position="201"/>
        <end position="222"/>
    </location>
</feature>
<feature type="region of interest" description="Spacer">
    <location>
        <begin position="721"/>
        <end position="842"/>
    </location>
</feature>
<feature type="region of interest" description="Disordered" evidence="7">
    <location>
        <begin position="1265"/>
        <end position="1295"/>
    </location>
</feature>
<feature type="compositionally biased region" description="Polar residues" evidence="7">
    <location>
        <begin position="1266"/>
        <end position="1277"/>
    </location>
</feature>
<feature type="active site" evidence="4 6">
    <location>
        <position position="400"/>
    </location>
</feature>
<feature type="binding site" evidence="1">
    <location>
        <position position="399"/>
    </location>
    <ligand>
        <name>Zn(2+)</name>
        <dbReference type="ChEBI" id="CHEBI:29105"/>
        <note>catalytic</note>
    </ligand>
</feature>
<feature type="binding site" evidence="1">
    <location>
        <position position="403"/>
    </location>
    <ligand>
        <name>Zn(2+)</name>
        <dbReference type="ChEBI" id="CHEBI:29105"/>
        <note>catalytic</note>
    </ligand>
</feature>
<feature type="binding site" evidence="1">
    <location>
        <position position="409"/>
    </location>
    <ligand>
        <name>Zn(2+)</name>
        <dbReference type="ChEBI" id="CHEBI:29105"/>
        <note>catalytic</note>
    </ligand>
</feature>
<feature type="glycosylation site" description="N-linked (GlcNAc...) asparagine" evidence="2">
    <location>
        <position position="92"/>
    </location>
</feature>
<feature type="glycosylation site" description="N-linked (GlcNAc...) asparagine" evidence="2">
    <location>
        <position position="221"/>
    </location>
</feature>
<feature type="glycosylation site" description="N-linked (GlcNAc...) asparagine" evidence="2">
    <location>
        <position position="714"/>
    </location>
</feature>
<feature type="glycosylation site" description="N-linked (GlcNAc...) asparagine" evidence="2">
    <location>
        <position position="798"/>
    </location>
</feature>
<feature type="glycosylation site" description="N-linked (GlcNAc...) asparagine" evidence="2">
    <location>
        <position position="805"/>
    </location>
</feature>
<feature type="glycosylation site" description="N-linked (GlcNAc...) asparagine" evidence="2">
    <location>
        <position position="1057"/>
    </location>
</feature>
<feature type="glycosylation site" description="N-linked (GlcNAc...) asparagine" evidence="2">
    <location>
        <position position="1562"/>
    </location>
</feature>
<feature type="glycosylation site" description="N-linked (GlcNAc...) asparagine" evidence="2">
    <location>
        <position position="1719"/>
    </location>
</feature>
<feature type="glycosylation site" description="N-linked (GlcNAc...) asparagine" evidence="2">
    <location>
        <position position="1759"/>
    </location>
</feature>
<feature type="glycosylation site" description="N-linked (GlcNAc...) asparagine" evidence="2">
    <location>
        <position position="1777"/>
    </location>
</feature>
<feature type="disulfide bond" evidence="1">
    <location>
        <begin position="330"/>
        <end position="383"/>
    </location>
</feature>
<feature type="disulfide bond" evidence="1">
    <location>
        <begin position="359"/>
        <end position="365"/>
    </location>
</feature>
<feature type="disulfide bond" evidence="1">
    <location>
        <begin position="377"/>
        <end position="459"/>
    </location>
</feature>
<feature type="disulfide bond" evidence="1">
    <location>
        <begin position="415"/>
        <end position="443"/>
    </location>
</feature>
<feature type="disulfide bond" evidence="1">
    <location>
        <begin position="486"/>
        <end position="508"/>
    </location>
</feature>
<feature type="disulfide bond" evidence="1">
    <location>
        <begin position="497"/>
        <end position="518"/>
    </location>
</feature>
<feature type="disulfide bond" evidence="1">
    <location>
        <begin position="503"/>
        <end position="537"/>
    </location>
</feature>
<feature type="disulfide bond" evidence="1">
    <location>
        <begin position="531"/>
        <end position="542"/>
    </location>
</feature>
<feature type="disulfide bond" evidence="1">
    <location>
        <begin position="565"/>
        <end position="602"/>
    </location>
</feature>
<feature type="disulfide bond" evidence="1">
    <location>
        <begin position="569"/>
        <end position="607"/>
    </location>
</feature>
<feature type="disulfide bond" evidence="1">
    <location>
        <begin position="580"/>
        <end position="592"/>
    </location>
</feature>
<feature type="splice variant" id="VSP_007606" description="In isoform 2." evidence="9">
    <original>CS</original>
    <variation>VR</variation>
    <location>
        <begin position="1424"/>
        <end position="1425"/>
    </location>
</feature>
<feature type="splice variant" id="VSP_007607" description="In isoform 2." evidence="9">
    <location>
        <begin position="1426"/>
        <end position="1906"/>
    </location>
</feature>
<feature type="sequence conflict" description="In Ref. 2; AAO74895/AAO74896." evidence="10" ref="2">
    <original>D</original>
    <variation>Y</variation>
    <location>
        <position position="1211"/>
    </location>
</feature>
<feature type="sequence conflict" description="In Ref. 1; CAD54808." evidence="10" ref="1">
    <original>L</original>
    <variation>S</variation>
    <location>
        <position position="1262"/>
    </location>
</feature>
<gene>
    <name type="primary">Adamts20</name>
</gene>
<keyword id="KW-0025">Alternative splicing</keyword>
<keyword id="KW-0165">Cleavage on pair of basic residues</keyword>
<keyword id="KW-1015">Disulfide bond</keyword>
<keyword id="KW-0272">Extracellular matrix</keyword>
<keyword id="KW-0325">Glycoprotein</keyword>
<keyword id="KW-0378">Hydrolase</keyword>
<keyword id="KW-0479">Metal-binding</keyword>
<keyword id="KW-0482">Metalloprotease</keyword>
<keyword id="KW-0645">Protease</keyword>
<keyword id="KW-1185">Reference proteome</keyword>
<keyword id="KW-0677">Repeat</keyword>
<keyword id="KW-0964">Secreted</keyword>
<keyword id="KW-0732">Signal</keyword>
<keyword id="KW-0862">Zinc</keyword>
<keyword id="KW-0865">Zymogen</keyword>
<evidence type="ECO:0000250" key="1"/>
<evidence type="ECO:0000255" key="2"/>
<evidence type="ECO:0000255" key="3">
    <source>
        <dbReference type="PROSITE-ProRule" id="PRU00210"/>
    </source>
</evidence>
<evidence type="ECO:0000255" key="4">
    <source>
        <dbReference type="PROSITE-ProRule" id="PRU00276"/>
    </source>
</evidence>
<evidence type="ECO:0000255" key="5">
    <source>
        <dbReference type="PROSITE-ProRule" id="PRU00383"/>
    </source>
</evidence>
<evidence type="ECO:0000255" key="6">
    <source>
        <dbReference type="PROSITE-ProRule" id="PRU10095"/>
    </source>
</evidence>
<evidence type="ECO:0000256" key="7">
    <source>
        <dbReference type="SAM" id="MobiDB-lite"/>
    </source>
</evidence>
<evidence type="ECO:0000269" key="8">
    <source>
    </source>
</evidence>
<evidence type="ECO:0000303" key="9">
    <source>
    </source>
</evidence>
<evidence type="ECO:0000305" key="10"/>
<proteinExistence type="evidence at transcript level"/>
<accession>P59511</accession>
<accession>E9QLA1</accession>
<organism>
    <name type="scientific">Mus musculus</name>
    <name type="common">Mouse</name>
    <dbReference type="NCBI Taxonomy" id="10090"/>
    <lineage>
        <taxon>Eukaryota</taxon>
        <taxon>Metazoa</taxon>
        <taxon>Chordata</taxon>
        <taxon>Craniata</taxon>
        <taxon>Vertebrata</taxon>
        <taxon>Euteleostomi</taxon>
        <taxon>Mammalia</taxon>
        <taxon>Eutheria</taxon>
        <taxon>Euarchontoglires</taxon>
        <taxon>Glires</taxon>
        <taxon>Rodentia</taxon>
        <taxon>Myomorpha</taxon>
        <taxon>Muroidea</taxon>
        <taxon>Muridae</taxon>
        <taxon>Murinae</taxon>
        <taxon>Mus</taxon>
        <taxon>Mus</taxon>
    </lineage>
</organism>